<feature type="chain" id="PRO_1000014187" description="Small ribosomal subunit protein uS7">
    <location>
        <begin position="1"/>
        <end position="156"/>
    </location>
</feature>
<protein>
    <recommendedName>
        <fullName evidence="1">Small ribosomal subunit protein uS7</fullName>
    </recommendedName>
    <alternativeName>
        <fullName evidence="2">30S ribosomal protein S7</fullName>
    </alternativeName>
</protein>
<organism>
    <name type="scientific">Escherichia coli O1:K1 / APEC</name>
    <dbReference type="NCBI Taxonomy" id="405955"/>
    <lineage>
        <taxon>Bacteria</taxon>
        <taxon>Pseudomonadati</taxon>
        <taxon>Pseudomonadota</taxon>
        <taxon>Gammaproteobacteria</taxon>
        <taxon>Enterobacterales</taxon>
        <taxon>Enterobacteriaceae</taxon>
        <taxon>Escherichia</taxon>
    </lineage>
</organism>
<comment type="function">
    <text evidence="1">One of the primary rRNA binding proteins, it binds directly to 16S rRNA where it nucleates assembly of the head domain of the 30S subunit. Is located at the subunit interface close to the decoding center, probably blocks exit of the E-site tRNA.</text>
</comment>
<comment type="subunit">
    <text evidence="1">Part of the 30S ribosomal subunit. Contacts proteins S9 and S11.</text>
</comment>
<comment type="similarity">
    <text evidence="1">Belongs to the universal ribosomal protein uS7 family.</text>
</comment>
<dbReference type="EMBL" id="CP000468">
    <property type="protein sequence ID" value="ABJ02818.1"/>
    <property type="molecule type" value="Genomic_DNA"/>
</dbReference>
<dbReference type="RefSeq" id="WP_001138043.1">
    <property type="nucleotide sequence ID" value="NZ_CADILS010000059.1"/>
</dbReference>
<dbReference type="SMR" id="A1AGM8"/>
<dbReference type="GeneID" id="93778657"/>
<dbReference type="KEGG" id="ecv:APECO1_3112"/>
<dbReference type="HOGENOM" id="CLU_072226_1_1_6"/>
<dbReference type="Proteomes" id="UP000008216">
    <property type="component" value="Chromosome"/>
</dbReference>
<dbReference type="GO" id="GO:0015935">
    <property type="term" value="C:small ribosomal subunit"/>
    <property type="evidence" value="ECO:0007669"/>
    <property type="project" value="InterPro"/>
</dbReference>
<dbReference type="GO" id="GO:0019843">
    <property type="term" value="F:rRNA binding"/>
    <property type="evidence" value="ECO:0007669"/>
    <property type="project" value="UniProtKB-UniRule"/>
</dbReference>
<dbReference type="GO" id="GO:0003735">
    <property type="term" value="F:structural constituent of ribosome"/>
    <property type="evidence" value="ECO:0007669"/>
    <property type="project" value="InterPro"/>
</dbReference>
<dbReference type="GO" id="GO:0000049">
    <property type="term" value="F:tRNA binding"/>
    <property type="evidence" value="ECO:0007669"/>
    <property type="project" value="UniProtKB-UniRule"/>
</dbReference>
<dbReference type="GO" id="GO:0006412">
    <property type="term" value="P:translation"/>
    <property type="evidence" value="ECO:0007669"/>
    <property type="project" value="UniProtKB-UniRule"/>
</dbReference>
<dbReference type="CDD" id="cd14869">
    <property type="entry name" value="uS7_Bacteria"/>
    <property type="match status" value="1"/>
</dbReference>
<dbReference type="FunFam" id="1.10.455.10:FF:000001">
    <property type="entry name" value="30S ribosomal protein S7"/>
    <property type="match status" value="1"/>
</dbReference>
<dbReference type="Gene3D" id="1.10.455.10">
    <property type="entry name" value="Ribosomal protein S7 domain"/>
    <property type="match status" value="1"/>
</dbReference>
<dbReference type="HAMAP" id="MF_00480_B">
    <property type="entry name" value="Ribosomal_uS7_B"/>
    <property type="match status" value="1"/>
</dbReference>
<dbReference type="InterPro" id="IPR000235">
    <property type="entry name" value="Ribosomal_uS7"/>
</dbReference>
<dbReference type="InterPro" id="IPR005717">
    <property type="entry name" value="Ribosomal_uS7_bac/org-type"/>
</dbReference>
<dbReference type="InterPro" id="IPR020606">
    <property type="entry name" value="Ribosomal_uS7_CS"/>
</dbReference>
<dbReference type="InterPro" id="IPR023798">
    <property type="entry name" value="Ribosomal_uS7_dom"/>
</dbReference>
<dbReference type="InterPro" id="IPR036823">
    <property type="entry name" value="Ribosomal_uS7_dom_sf"/>
</dbReference>
<dbReference type="NCBIfam" id="TIGR01029">
    <property type="entry name" value="rpsG_bact"/>
    <property type="match status" value="1"/>
</dbReference>
<dbReference type="PANTHER" id="PTHR11205">
    <property type="entry name" value="RIBOSOMAL PROTEIN S7"/>
    <property type="match status" value="1"/>
</dbReference>
<dbReference type="Pfam" id="PF00177">
    <property type="entry name" value="Ribosomal_S7"/>
    <property type="match status" value="1"/>
</dbReference>
<dbReference type="PIRSF" id="PIRSF002122">
    <property type="entry name" value="RPS7p_RPS7a_RPS5e_RPS7o"/>
    <property type="match status" value="1"/>
</dbReference>
<dbReference type="SUPFAM" id="SSF47973">
    <property type="entry name" value="Ribosomal protein S7"/>
    <property type="match status" value="1"/>
</dbReference>
<dbReference type="PROSITE" id="PS00052">
    <property type="entry name" value="RIBOSOMAL_S7"/>
    <property type="match status" value="1"/>
</dbReference>
<keyword id="KW-1185">Reference proteome</keyword>
<keyword id="KW-0687">Ribonucleoprotein</keyword>
<keyword id="KW-0689">Ribosomal protein</keyword>
<keyword id="KW-0694">RNA-binding</keyword>
<keyword id="KW-0699">rRNA-binding</keyword>
<keyword id="KW-0820">tRNA-binding</keyword>
<evidence type="ECO:0000255" key="1">
    <source>
        <dbReference type="HAMAP-Rule" id="MF_00480"/>
    </source>
</evidence>
<evidence type="ECO:0000305" key="2"/>
<reference key="1">
    <citation type="journal article" date="2007" name="J. Bacteriol.">
        <title>The genome sequence of avian pathogenic Escherichia coli strain O1:K1:H7 shares strong similarities with human extraintestinal pathogenic E. coli genomes.</title>
        <authorList>
            <person name="Johnson T.J."/>
            <person name="Kariyawasam S."/>
            <person name="Wannemuehler Y."/>
            <person name="Mangiamele P."/>
            <person name="Johnson S.J."/>
            <person name="Doetkott C."/>
            <person name="Skyberg J.A."/>
            <person name="Lynne A.M."/>
            <person name="Johnson J.R."/>
            <person name="Nolan L.K."/>
        </authorList>
    </citation>
    <scope>NUCLEOTIDE SEQUENCE [LARGE SCALE GENOMIC DNA]</scope>
</reference>
<gene>
    <name evidence="1" type="primary">rpsG</name>
    <name type="ordered locus">Ecok1_33240</name>
    <name type="ORF">APECO1_3112</name>
</gene>
<name>RS7_ECOK1</name>
<sequence length="156" mass="17604">MPRRRVIGQRKILPDPKFGSELLAKFVNILMVDGKKSTAESIVYSALETLAQRSGKSELEAFEVALENVRPTVEVKSRRVGGSTYQVPVEVRPVRRNALAMRWIVEAARKRGDKSMALRLANELSDAAENKGTAVKKREDVHRMAEANKAFAHYRW</sequence>
<proteinExistence type="inferred from homology"/>
<accession>A1AGM8</accession>